<gene>
    <name evidence="1" type="primary">rpsG</name>
    <name type="ordered locus">SDY_3502</name>
</gene>
<comment type="function">
    <text evidence="1">One of the primary rRNA binding proteins, it binds directly to 16S rRNA where it nucleates assembly of the head domain of the 30S subunit. Is located at the subunit interface close to the decoding center, probably blocks exit of the E-site tRNA.</text>
</comment>
<comment type="subunit">
    <text evidence="1">Part of the 30S ribosomal subunit. Contacts proteins S9 and S11.</text>
</comment>
<comment type="similarity">
    <text evidence="1">Belongs to the universal ribosomal protein uS7 family.</text>
</comment>
<proteinExistence type="inferred from homology"/>
<keyword id="KW-1185">Reference proteome</keyword>
<keyword id="KW-0687">Ribonucleoprotein</keyword>
<keyword id="KW-0689">Ribosomal protein</keyword>
<keyword id="KW-0694">RNA-binding</keyword>
<keyword id="KW-0699">rRNA-binding</keyword>
<keyword id="KW-0820">tRNA-binding</keyword>
<protein>
    <recommendedName>
        <fullName evidence="1">Small ribosomal subunit protein uS7</fullName>
    </recommendedName>
    <alternativeName>
        <fullName evidence="2">30S ribosomal protein S7</fullName>
    </alternativeName>
</protein>
<organism>
    <name type="scientific">Shigella dysenteriae serotype 1 (strain Sd197)</name>
    <dbReference type="NCBI Taxonomy" id="300267"/>
    <lineage>
        <taxon>Bacteria</taxon>
        <taxon>Pseudomonadati</taxon>
        <taxon>Pseudomonadota</taxon>
        <taxon>Gammaproteobacteria</taxon>
        <taxon>Enterobacterales</taxon>
        <taxon>Enterobacteriaceae</taxon>
        <taxon>Shigella</taxon>
    </lineage>
</organism>
<name>RS7_SHIDS</name>
<sequence length="156" mass="17570">MPRRRVIGQRKILPDPKFGSELLAKFVNILMVDGKKSTAESIVYSALETLAQRSGKSELEALEVALENVRPTVEVKSRRVGGSTYQVPVEVRPVRRNALAMRWIVEAARKRGDKSMALRLANELSDAAENKGTAVKKREDVHRMAEANKAFAHYRW</sequence>
<reference key="1">
    <citation type="journal article" date="2005" name="Nucleic Acids Res.">
        <title>Genome dynamics and diversity of Shigella species, the etiologic agents of bacillary dysentery.</title>
        <authorList>
            <person name="Yang F."/>
            <person name="Yang J."/>
            <person name="Zhang X."/>
            <person name="Chen L."/>
            <person name="Jiang Y."/>
            <person name="Yan Y."/>
            <person name="Tang X."/>
            <person name="Wang J."/>
            <person name="Xiong Z."/>
            <person name="Dong J."/>
            <person name="Xue Y."/>
            <person name="Zhu Y."/>
            <person name="Xu X."/>
            <person name="Sun L."/>
            <person name="Chen S."/>
            <person name="Nie H."/>
            <person name="Peng J."/>
            <person name="Xu J."/>
            <person name="Wang Y."/>
            <person name="Yuan Z."/>
            <person name="Wen Y."/>
            <person name="Yao Z."/>
            <person name="Shen Y."/>
            <person name="Qiang B."/>
            <person name="Hou Y."/>
            <person name="Yu J."/>
            <person name="Jin Q."/>
        </authorList>
    </citation>
    <scope>NUCLEOTIDE SEQUENCE [LARGE SCALE GENOMIC DNA]</scope>
    <source>
        <strain>Sd197</strain>
    </source>
</reference>
<feature type="chain" id="PRO_0000226527" description="Small ribosomal subunit protein uS7">
    <location>
        <begin position="1"/>
        <end position="156"/>
    </location>
</feature>
<dbReference type="EMBL" id="CP000034">
    <property type="protein sequence ID" value="ABB63480.1"/>
    <property type="molecule type" value="Genomic_DNA"/>
</dbReference>
<dbReference type="RefSeq" id="WP_001138048.1">
    <property type="nucleotide sequence ID" value="NC_007606.1"/>
</dbReference>
<dbReference type="RefSeq" id="YP_404971.1">
    <property type="nucleotide sequence ID" value="NC_007606.1"/>
</dbReference>
<dbReference type="SMR" id="Q32B25"/>
<dbReference type="STRING" id="300267.SDY_3502"/>
<dbReference type="EnsemblBacteria" id="ABB63480">
    <property type="protein sequence ID" value="ABB63480"/>
    <property type="gene ID" value="SDY_3502"/>
</dbReference>
<dbReference type="KEGG" id="sdy:SDY_3502"/>
<dbReference type="PATRIC" id="fig|300267.13.peg.4156"/>
<dbReference type="HOGENOM" id="CLU_072226_1_1_6"/>
<dbReference type="Proteomes" id="UP000002716">
    <property type="component" value="Chromosome"/>
</dbReference>
<dbReference type="GO" id="GO:0015935">
    <property type="term" value="C:small ribosomal subunit"/>
    <property type="evidence" value="ECO:0007669"/>
    <property type="project" value="InterPro"/>
</dbReference>
<dbReference type="GO" id="GO:0019843">
    <property type="term" value="F:rRNA binding"/>
    <property type="evidence" value="ECO:0007669"/>
    <property type="project" value="UniProtKB-UniRule"/>
</dbReference>
<dbReference type="GO" id="GO:0003735">
    <property type="term" value="F:structural constituent of ribosome"/>
    <property type="evidence" value="ECO:0007669"/>
    <property type="project" value="InterPro"/>
</dbReference>
<dbReference type="GO" id="GO:0000049">
    <property type="term" value="F:tRNA binding"/>
    <property type="evidence" value="ECO:0007669"/>
    <property type="project" value="UniProtKB-UniRule"/>
</dbReference>
<dbReference type="GO" id="GO:0006412">
    <property type="term" value="P:translation"/>
    <property type="evidence" value="ECO:0007669"/>
    <property type="project" value="UniProtKB-UniRule"/>
</dbReference>
<dbReference type="CDD" id="cd14869">
    <property type="entry name" value="uS7_Bacteria"/>
    <property type="match status" value="1"/>
</dbReference>
<dbReference type="FunFam" id="1.10.455.10:FF:000001">
    <property type="entry name" value="30S ribosomal protein S7"/>
    <property type="match status" value="1"/>
</dbReference>
<dbReference type="Gene3D" id="1.10.455.10">
    <property type="entry name" value="Ribosomal protein S7 domain"/>
    <property type="match status" value="1"/>
</dbReference>
<dbReference type="HAMAP" id="MF_00480_B">
    <property type="entry name" value="Ribosomal_uS7_B"/>
    <property type="match status" value="1"/>
</dbReference>
<dbReference type="InterPro" id="IPR000235">
    <property type="entry name" value="Ribosomal_uS7"/>
</dbReference>
<dbReference type="InterPro" id="IPR005717">
    <property type="entry name" value="Ribosomal_uS7_bac/org-type"/>
</dbReference>
<dbReference type="InterPro" id="IPR020606">
    <property type="entry name" value="Ribosomal_uS7_CS"/>
</dbReference>
<dbReference type="InterPro" id="IPR023798">
    <property type="entry name" value="Ribosomal_uS7_dom"/>
</dbReference>
<dbReference type="InterPro" id="IPR036823">
    <property type="entry name" value="Ribosomal_uS7_dom_sf"/>
</dbReference>
<dbReference type="NCBIfam" id="TIGR01029">
    <property type="entry name" value="rpsG_bact"/>
    <property type="match status" value="1"/>
</dbReference>
<dbReference type="PANTHER" id="PTHR11205">
    <property type="entry name" value="RIBOSOMAL PROTEIN S7"/>
    <property type="match status" value="1"/>
</dbReference>
<dbReference type="Pfam" id="PF00177">
    <property type="entry name" value="Ribosomal_S7"/>
    <property type="match status" value="1"/>
</dbReference>
<dbReference type="PIRSF" id="PIRSF002122">
    <property type="entry name" value="RPS7p_RPS7a_RPS5e_RPS7o"/>
    <property type="match status" value="1"/>
</dbReference>
<dbReference type="SUPFAM" id="SSF47973">
    <property type="entry name" value="Ribosomal protein S7"/>
    <property type="match status" value="1"/>
</dbReference>
<dbReference type="PROSITE" id="PS00052">
    <property type="entry name" value="RIBOSOMAL_S7"/>
    <property type="match status" value="1"/>
</dbReference>
<accession>Q32B25</accession>
<evidence type="ECO:0000255" key="1">
    <source>
        <dbReference type="HAMAP-Rule" id="MF_00480"/>
    </source>
</evidence>
<evidence type="ECO:0000305" key="2"/>